<sequence length="442" mass="47955">MAKTGMYVGLDIGTTSVKVVVAEYIDSQMNIIGVGNAKSEGINRGIIVDIDKTVQAIQRAVRQAEEKAGIQIKGVSVGLPANLLEVENCQGMIAVNGDSKEITDEDVRNVASAALVRSIPPERQIVSILPQDFTVDGFEGIKDPRGMIGVRLEMYGLLFTGPKTIVHNIRKCVENAGLVVNELVITPLALTETILSDGEKDFGTIVIDMGGGQTTTAVMHDKQLKFTSLDQEGGEFVTKDISIVLNTSFNNAEALKINYGDAYPERTSANEEFPVDVIGQSEPVKVDERYLSEVISARMEQIFNKAKEALDQIEALELPGGIVLTGGAASLPGVVDLAQEIFGVNVKLYVPNQMGLRNPVFTNVISIVDYSANLSEVYQLAKIAVTGETVVAHHTTVEQEVTSYDNDSYDAPEETVYDEPEQKKSDEDVTTKIKGFFSKIFD</sequence>
<dbReference type="EMBL" id="Y13922">
    <property type="protein sequence ID" value="CAA74237.1"/>
    <property type="molecule type" value="Genomic_DNA"/>
</dbReference>
<dbReference type="RefSeq" id="WP_088775049.1">
    <property type="nucleotide sequence ID" value="NZ_CP072891.1"/>
</dbReference>
<dbReference type="SMR" id="O07672"/>
<dbReference type="STRING" id="1354.A6P53_03415"/>
<dbReference type="GO" id="GO:0032153">
    <property type="term" value="C:cell division site"/>
    <property type="evidence" value="ECO:0007669"/>
    <property type="project" value="UniProtKB-UniRule"/>
</dbReference>
<dbReference type="GO" id="GO:0009898">
    <property type="term" value="C:cytoplasmic side of plasma membrane"/>
    <property type="evidence" value="ECO:0007669"/>
    <property type="project" value="UniProtKB-UniRule"/>
</dbReference>
<dbReference type="GO" id="GO:0043093">
    <property type="term" value="P:FtsZ-dependent cytokinesis"/>
    <property type="evidence" value="ECO:0007669"/>
    <property type="project" value="UniProtKB-UniRule"/>
</dbReference>
<dbReference type="CDD" id="cd24048">
    <property type="entry name" value="ASKHA_NBD_FtsA"/>
    <property type="match status" value="1"/>
</dbReference>
<dbReference type="Gene3D" id="3.30.420.40">
    <property type="match status" value="2"/>
</dbReference>
<dbReference type="HAMAP" id="MF_02033">
    <property type="entry name" value="FtsA"/>
    <property type="match status" value="1"/>
</dbReference>
<dbReference type="InterPro" id="IPR043129">
    <property type="entry name" value="ATPase_NBD"/>
</dbReference>
<dbReference type="InterPro" id="IPR020823">
    <property type="entry name" value="Cell_div_FtsA"/>
</dbReference>
<dbReference type="InterPro" id="IPR050696">
    <property type="entry name" value="FtsA/MreB"/>
</dbReference>
<dbReference type="InterPro" id="IPR021873">
    <property type="entry name" value="FtsA_C"/>
</dbReference>
<dbReference type="InterPro" id="IPR003494">
    <property type="entry name" value="SHS2_FtsA"/>
</dbReference>
<dbReference type="NCBIfam" id="TIGR01174">
    <property type="entry name" value="ftsA"/>
    <property type="match status" value="1"/>
</dbReference>
<dbReference type="PANTHER" id="PTHR32432:SF4">
    <property type="entry name" value="CELL DIVISION PROTEIN FTSA"/>
    <property type="match status" value="1"/>
</dbReference>
<dbReference type="PANTHER" id="PTHR32432">
    <property type="entry name" value="CELL DIVISION PROTEIN FTSA-RELATED"/>
    <property type="match status" value="1"/>
</dbReference>
<dbReference type="Pfam" id="PF14450">
    <property type="entry name" value="FtsA"/>
    <property type="match status" value="1"/>
</dbReference>
<dbReference type="Pfam" id="PF11983">
    <property type="entry name" value="FtsA_C"/>
    <property type="match status" value="1"/>
</dbReference>
<dbReference type="Pfam" id="PF02491">
    <property type="entry name" value="SHS2_FTSA"/>
    <property type="match status" value="1"/>
</dbReference>
<dbReference type="PIRSF" id="PIRSF003101">
    <property type="entry name" value="FtsA"/>
    <property type="match status" value="1"/>
</dbReference>
<dbReference type="SMART" id="SM00842">
    <property type="entry name" value="FtsA"/>
    <property type="match status" value="1"/>
</dbReference>
<dbReference type="SUPFAM" id="SSF53067">
    <property type="entry name" value="Actin-like ATPase domain"/>
    <property type="match status" value="2"/>
</dbReference>
<name>FTSA_ENTHR</name>
<proteinExistence type="inferred from homology"/>
<evidence type="ECO:0000255" key="1">
    <source>
        <dbReference type="HAMAP-Rule" id="MF_02033"/>
    </source>
</evidence>
<evidence type="ECO:0000256" key="2">
    <source>
        <dbReference type="SAM" id="MobiDB-lite"/>
    </source>
</evidence>
<feature type="chain" id="PRO_0000062739" description="Cell division protein FtsA">
    <location>
        <begin position="1"/>
        <end position="442"/>
    </location>
</feature>
<feature type="region of interest" description="Disordered" evidence="2">
    <location>
        <begin position="401"/>
        <end position="428"/>
    </location>
</feature>
<feature type="compositionally biased region" description="Acidic residues" evidence="2">
    <location>
        <begin position="407"/>
        <end position="419"/>
    </location>
</feature>
<organism>
    <name type="scientific">Enterococcus hirae</name>
    <dbReference type="NCBI Taxonomy" id="1354"/>
    <lineage>
        <taxon>Bacteria</taxon>
        <taxon>Bacillati</taxon>
        <taxon>Bacillota</taxon>
        <taxon>Bacilli</taxon>
        <taxon>Lactobacillales</taxon>
        <taxon>Enterococcaceae</taxon>
        <taxon>Enterococcus</taxon>
    </lineage>
</organism>
<comment type="function">
    <text evidence="1">Cell division protein that is involved in the assembly of the Z ring. May serve as a membrane anchor for the Z ring.</text>
</comment>
<comment type="subunit">
    <text evidence="1">Self-interacts. Interacts with FtsZ.</text>
</comment>
<comment type="subcellular location">
    <subcellularLocation>
        <location evidence="1">Cell membrane</location>
        <topology evidence="1">Peripheral membrane protein</topology>
        <orientation evidence="1">Cytoplasmic side</orientation>
    </subcellularLocation>
    <text evidence="1">Localizes to the Z ring in an FtsZ-dependent manner. Targeted to the membrane through a conserved C-terminal amphipathic helix.</text>
</comment>
<comment type="similarity">
    <text evidence="1">Belongs to the FtsA/MreB family.</text>
</comment>
<reference key="1">
    <citation type="journal article" date="1998" name="DNA Seq.">
        <title>The division and cell wall gene cluster of Enterococcus hirae S185.</title>
        <authorList>
            <person name="Duez C."/>
            <person name="Thamm I."/>
            <person name="Sapunaric F."/>
            <person name="Coyette J."/>
            <person name="Ghuysen J.-M."/>
        </authorList>
    </citation>
    <scope>NUCLEOTIDE SEQUENCE [GENOMIC DNA]</scope>
    <source>
        <strain>S185</strain>
    </source>
</reference>
<keyword id="KW-0131">Cell cycle</keyword>
<keyword id="KW-0132">Cell division</keyword>
<keyword id="KW-1003">Cell membrane</keyword>
<keyword id="KW-0472">Membrane</keyword>
<gene>
    <name evidence="1" type="primary">ftsA</name>
</gene>
<accession>O07672</accession>
<protein>
    <recommendedName>
        <fullName evidence="1">Cell division protein FtsA</fullName>
    </recommendedName>
</protein>